<accession>Q57655</accession>
<name>Y202_METJA</name>
<gene>
    <name type="ordered locus">MJ0202</name>
</gene>
<reference key="1">
    <citation type="journal article" date="1996" name="Science">
        <title>Complete genome sequence of the methanogenic archaeon, Methanococcus jannaschii.</title>
        <authorList>
            <person name="Bult C.J."/>
            <person name="White O."/>
            <person name="Olsen G.J."/>
            <person name="Zhou L."/>
            <person name="Fleischmann R.D."/>
            <person name="Sutton G.G."/>
            <person name="Blake J.A."/>
            <person name="FitzGerald L.M."/>
            <person name="Clayton R.A."/>
            <person name="Gocayne J.D."/>
            <person name="Kerlavage A.R."/>
            <person name="Dougherty B.A."/>
            <person name="Tomb J.-F."/>
            <person name="Adams M.D."/>
            <person name="Reich C.I."/>
            <person name="Overbeek R."/>
            <person name="Kirkness E.F."/>
            <person name="Weinstock K.G."/>
            <person name="Merrick J.M."/>
            <person name="Glodek A."/>
            <person name="Scott J.L."/>
            <person name="Geoghagen N.S.M."/>
            <person name="Weidman J.F."/>
            <person name="Fuhrmann J.L."/>
            <person name="Nguyen D."/>
            <person name="Utterback T.R."/>
            <person name="Kelley J.M."/>
            <person name="Peterson J.D."/>
            <person name="Sadow P.W."/>
            <person name="Hanna M.C."/>
            <person name="Cotton M.D."/>
            <person name="Roberts K.M."/>
            <person name="Hurst M.A."/>
            <person name="Kaine B.P."/>
            <person name="Borodovsky M."/>
            <person name="Klenk H.-P."/>
            <person name="Fraser C.M."/>
            <person name="Smith H.O."/>
            <person name="Woese C.R."/>
            <person name="Venter J.C."/>
        </authorList>
    </citation>
    <scope>NUCLEOTIDE SEQUENCE [LARGE SCALE GENOMIC DNA]</scope>
    <source>
        <strain>ATCC 43067 / DSM 2661 / JAL-1 / JCM 10045 / NBRC 100440</strain>
    </source>
</reference>
<keyword id="KW-1185">Reference proteome</keyword>
<proteinExistence type="predicted"/>
<sequence length="304" mass="34419">MVLLILKFHGESVKIKPECAICIIRQVVDAANEITDDEREQFRLIKSTMEVIKDVYGESAVPAWMGTVVHRYLKKISNNNDPYKNLKEKANKIALQYLDKVREMSNTDDELERLRKKVLATIAGNVIDFGAYSTGINIEKLIEDTLNGELKIDNSRKLLNDLKDKNIKKILYICDNAGEIIFDRVLMEEIKKYDKDIVAVVKGKPILNDATLEDAKIAKIDEIAKVITTGSDIIGIILEECSEEFLKEFESADLIIAKGMGNYESLTEYEDKIDKPIYYILKAKCKPVAENIGVDVGDNVLLKR</sequence>
<organism>
    <name type="scientific">Methanocaldococcus jannaschii (strain ATCC 43067 / DSM 2661 / JAL-1 / JCM 10045 / NBRC 100440)</name>
    <name type="common">Methanococcus jannaschii</name>
    <dbReference type="NCBI Taxonomy" id="243232"/>
    <lineage>
        <taxon>Archaea</taxon>
        <taxon>Methanobacteriati</taxon>
        <taxon>Methanobacteriota</taxon>
        <taxon>Methanomada group</taxon>
        <taxon>Methanococci</taxon>
        <taxon>Methanococcales</taxon>
        <taxon>Methanocaldococcaceae</taxon>
        <taxon>Methanocaldococcus</taxon>
    </lineage>
</organism>
<protein>
    <recommendedName>
        <fullName>Uncharacterized protein MJ0202</fullName>
    </recommendedName>
</protein>
<feature type="chain" id="PRO_0000106739" description="Uncharacterized protein MJ0202">
    <location>
        <begin position="1"/>
        <end position="304"/>
    </location>
</feature>
<dbReference type="EMBL" id="L77117">
    <property type="protein sequence ID" value="AAB98186.1"/>
    <property type="molecule type" value="Genomic_DNA"/>
</dbReference>
<dbReference type="PIR" id="C64325">
    <property type="entry name" value="C64325"/>
</dbReference>
<dbReference type="SMR" id="Q57655"/>
<dbReference type="STRING" id="243232.MJ_0202"/>
<dbReference type="PaxDb" id="243232-MJ_0202"/>
<dbReference type="EnsemblBacteria" id="AAB98186">
    <property type="protein sequence ID" value="AAB98186"/>
    <property type="gene ID" value="MJ_0202"/>
</dbReference>
<dbReference type="KEGG" id="mja:MJ_0202"/>
<dbReference type="eggNOG" id="arCOG04410">
    <property type="taxonomic scope" value="Archaea"/>
</dbReference>
<dbReference type="HOGENOM" id="CLU_071520_1_0_2"/>
<dbReference type="InParanoid" id="Q57655"/>
<dbReference type="PhylomeDB" id="Q57655"/>
<dbReference type="Proteomes" id="UP000000805">
    <property type="component" value="Chromosome"/>
</dbReference>
<dbReference type="Gene3D" id="1.10.8.380">
    <property type="entry name" value="Uncharacterised protein PF01937, DUF89, domain 1"/>
    <property type="match status" value="1"/>
</dbReference>
<dbReference type="Gene3D" id="1.10.285.20">
    <property type="entry name" value="Uncharacterised protein PF01937, DUF89, domain 2"/>
    <property type="match status" value="1"/>
</dbReference>
<dbReference type="Gene3D" id="3.40.50.10880">
    <property type="entry name" value="Uncharacterised protein PF01937, DUF89, domain 3"/>
    <property type="match status" value="1"/>
</dbReference>
<dbReference type="InterPro" id="IPR036075">
    <property type="entry name" value="ARMT-1-like_metal-bd_sf"/>
</dbReference>
<dbReference type="InterPro" id="IPR002791">
    <property type="entry name" value="ARMT1-like_metal-bd"/>
</dbReference>
<dbReference type="InterPro" id="IPR014444">
    <property type="entry name" value="PH1575-like"/>
</dbReference>
<dbReference type="Pfam" id="PF01937">
    <property type="entry name" value="ARMT1-like_dom"/>
    <property type="match status" value="1"/>
</dbReference>
<dbReference type="PIRSF" id="PIRSF006593">
    <property type="entry name" value="UCP006593"/>
    <property type="match status" value="1"/>
</dbReference>
<dbReference type="SUPFAM" id="SSF111321">
    <property type="entry name" value="AF1104-like"/>
    <property type="match status" value="1"/>
</dbReference>